<accession>B0B7X8</accession>
<protein>
    <recommendedName>
        <fullName evidence="1">Lipoprotein signal peptidase</fullName>
        <ecNumber evidence="1">3.4.23.36</ecNumber>
    </recommendedName>
    <alternativeName>
        <fullName evidence="1">Prolipoprotein signal peptidase</fullName>
    </alternativeName>
    <alternativeName>
        <fullName evidence="1">Signal peptidase II</fullName>
        <shortName evidence="1">SPase II</shortName>
    </alternativeName>
</protein>
<name>LSPA_CHLT2</name>
<dbReference type="EC" id="3.4.23.36" evidence="1"/>
<dbReference type="EMBL" id="AM884176">
    <property type="protein sequence ID" value="CAP04104.1"/>
    <property type="molecule type" value="Genomic_DNA"/>
</dbReference>
<dbReference type="RefSeq" id="WP_009873788.1">
    <property type="nucleotide sequence ID" value="NC_010287.1"/>
</dbReference>
<dbReference type="RefSeq" id="YP_001654737.1">
    <property type="nucleotide sequence ID" value="NC_010287.1"/>
</dbReference>
<dbReference type="SMR" id="B0B7X8"/>
<dbReference type="KEGG" id="ctb:CTL0665"/>
<dbReference type="PATRIC" id="fig|471472.4.peg.715"/>
<dbReference type="HOGENOM" id="CLU_083252_3_0_0"/>
<dbReference type="UniPathway" id="UPA00665"/>
<dbReference type="Proteomes" id="UP001154402">
    <property type="component" value="Chromosome"/>
</dbReference>
<dbReference type="GO" id="GO:0005886">
    <property type="term" value="C:plasma membrane"/>
    <property type="evidence" value="ECO:0007669"/>
    <property type="project" value="UniProtKB-SubCell"/>
</dbReference>
<dbReference type="GO" id="GO:0004190">
    <property type="term" value="F:aspartic-type endopeptidase activity"/>
    <property type="evidence" value="ECO:0007669"/>
    <property type="project" value="UniProtKB-UniRule"/>
</dbReference>
<dbReference type="GO" id="GO:0006508">
    <property type="term" value="P:proteolysis"/>
    <property type="evidence" value="ECO:0007669"/>
    <property type="project" value="UniProtKB-KW"/>
</dbReference>
<dbReference type="HAMAP" id="MF_00161">
    <property type="entry name" value="LspA"/>
    <property type="match status" value="1"/>
</dbReference>
<dbReference type="InterPro" id="IPR001872">
    <property type="entry name" value="Peptidase_A8"/>
</dbReference>
<dbReference type="NCBIfam" id="TIGR00077">
    <property type="entry name" value="lspA"/>
    <property type="match status" value="1"/>
</dbReference>
<dbReference type="PANTHER" id="PTHR33695">
    <property type="entry name" value="LIPOPROTEIN SIGNAL PEPTIDASE"/>
    <property type="match status" value="1"/>
</dbReference>
<dbReference type="PANTHER" id="PTHR33695:SF1">
    <property type="entry name" value="LIPOPROTEIN SIGNAL PEPTIDASE"/>
    <property type="match status" value="1"/>
</dbReference>
<dbReference type="Pfam" id="PF01252">
    <property type="entry name" value="Peptidase_A8"/>
    <property type="match status" value="1"/>
</dbReference>
<dbReference type="PRINTS" id="PR00781">
    <property type="entry name" value="LIPOSIGPTASE"/>
</dbReference>
<dbReference type="PROSITE" id="PS00855">
    <property type="entry name" value="SPASE_II"/>
    <property type="match status" value="1"/>
</dbReference>
<feature type="chain" id="PRO_1000097249" description="Lipoprotein signal peptidase">
    <location>
        <begin position="1"/>
        <end position="167"/>
    </location>
</feature>
<feature type="transmembrane region" description="Helical" evidence="1">
    <location>
        <begin position="8"/>
        <end position="28"/>
    </location>
</feature>
<feature type="transmembrane region" description="Helical" evidence="1">
    <location>
        <begin position="46"/>
        <end position="66"/>
    </location>
</feature>
<feature type="transmembrane region" description="Helical" evidence="1">
    <location>
        <begin position="68"/>
        <end position="88"/>
    </location>
</feature>
<feature type="transmembrane region" description="Helical" evidence="1">
    <location>
        <begin position="101"/>
        <end position="121"/>
    </location>
</feature>
<feature type="transmembrane region" description="Helical" evidence="1">
    <location>
        <begin position="139"/>
        <end position="159"/>
    </location>
</feature>
<feature type="active site" evidence="1">
    <location>
        <position position="125"/>
    </location>
</feature>
<feature type="active site" evidence="1">
    <location>
        <position position="143"/>
    </location>
</feature>
<sequence length="167" mass="18898">MPTRSLPTFLTLLLLASIDWVSKLVVLLKSCQLSPHSSAFLYSYVWGHFSFLIIPSFNEGAAFGLFAQYKIPLLIFRVCVILGLALFLRIKYKSLHRRTRIALTLILAGALGNVGDILLHGKVVDFLFLSYYSWRFPSFNLADAFISIGTLLLIGHLYFTKESKKCF</sequence>
<comment type="function">
    <text evidence="1">This protein specifically catalyzes the removal of signal peptides from prolipoproteins.</text>
</comment>
<comment type="catalytic activity">
    <reaction evidence="1">
        <text>Release of signal peptides from bacterial membrane prolipoproteins. Hydrolyzes -Xaa-Yaa-Zaa-|-(S,diacylglyceryl)Cys-, in which Xaa is hydrophobic (preferably Leu), and Yaa (Ala or Ser) and Zaa (Gly or Ala) have small, neutral side chains.</text>
        <dbReference type="EC" id="3.4.23.36"/>
    </reaction>
</comment>
<comment type="pathway">
    <text evidence="1">Protein modification; lipoprotein biosynthesis (signal peptide cleavage).</text>
</comment>
<comment type="subcellular location">
    <subcellularLocation>
        <location evidence="1">Cell inner membrane</location>
        <topology evidence="1">Multi-pass membrane protein</topology>
    </subcellularLocation>
</comment>
<comment type="similarity">
    <text evidence="1">Belongs to the peptidase A8 family.</text>
</comment>
<organism>
    <name type="scientific">Chlamydia trachomatis serovar L2 (strain ATCC VR-902B / DSM 19102 / 434/Bu)</name>
    <dbReference type="NCBI Taxonomy" id="471472"/>
    <lineage>
        <taxon>Bacteria</taxon>
        <taxon>Pseudomonadati</taxon>
        <taxon>Chlamydiota</taxon>
        <taxon>Chlamydiia</taxon>
        <taxon>Chlamydiales</taxon>
        <taxon>Chlamydiaceae</taxon>
        <taxon>Chlamydia/Chlamydophila group</taxon>
        <taxon>Chlamydia</taxon>
    </lineage>
</organism>
<proteinExistence type="inferred from homology"/>
<evidence type="ECO:0000255" key="1">
    <source>
        <dbReference type="HAMAP-Rule" id="MF_00161"/>
    </source>
</evidence>
<gene>
    <name evidence="1" type="primary">lspA</name>
    <name type="ordered locus">CTL0665</name>
</gene>
<reference key="1">
    <citation type="journal article" date="2008" name="Genome Res.">
        <title>Chlamydia trachomatis: genome sequence analysis of lymphogranuloma venereum isolates.</title>
        <authorList>
            <person name="Thomson N.R."/>
            <person name="Holden M.T.G."/>
            <person name="Carder C."/>
            <person name="Lennard N."/>
            <person name="Lockey S.J."/>
            <person name="Marsh P."/>
            <person name="Skipp P."/>
            <person name="O'Connor C.D."/>
            <person name="Goodhead I."/>
            <person name="Norbertzcak H."/>
            <person name="Harris B."/>
            <person name="Ormond D."/>
            <person name="Rance R."/>
            <person name="Quail M.A."/>
            <person name="Parkhill J."/>
            <person name="Stephens R.S."/>
            <person name="Clarke I.N."/>
        </authorList>
    </citation>
    <scope>NUCLEOTIDE SEQUENCE [LARGE SCALE GENOMIC DNA]</scope>
    <source>
        <strain>ATCC VR-902B / DSM 19102 / 434/Bu</strain>
    </source>
</reference>
<keyword id="KW-0064">Aspartyl protease</keyword>
<keyword id="KW-0997">Cell inner membrane</keyword>
<keyword id="KW-1003">Cell membrane</keyword>
<keyword id="KW-0378">Hydrolase</keyword>
<keyword id="KW-0472">Membrane</keyword>
<keyword id="KW-0645">Protease</keyword>
<keyword id="KW-0812">Transmembrane</keyword>
<keyword id="KW-1133">Transmembrane helix</keyword>